<accession>B1INE7</accession>
<name>PYRB_CLOBK</name>
<gene>
    <name evidence="1" type="primary">pyrB</name>
    <name type="ordered locus">CLD_1290</name>
</gene>
<dbReference type="EC" id="2.1.3.2" evidence="1"/>
<dbReference type="EMBL" id="CP000939">
    <property type="protein sequence ID" value="ACA45396.1"/>
    <property type="molecule type" value="Genomic_DNA"/>
</dbReference>
<dbReference type="RefSeq" id="WP_003405891.1">
    <property type="nucleotide sequence ID" value="NC_010516.1"/>
</dbReference>
<dbReference type="SMR" id="B1INE7"/>
<dbReference type="KEGG" id="cbb:CLD_1290"/>
<dbReference type="HOGENOM" id="CLU_043846_1_2_9"/>
<dbReference type="UniPathway" id="UPA00070">
    <property type="reaction ID" value="UER00116"/>
</dbReference>
<dbReference type="Proteomes" id="UP000008541">
    <property type="component" value="Chromosome"/>
</dbReference>
<dbReference type="GO" id="GO:0016597">
    <property type="term" value="F:amino acid binding"/>
    <property type="evidence" value="ECO:0007669"/>
    <property type="project" value="InterPro"/>
</dbReference>
<dbReference type="GO" id="GO:0004070">
    <property type="term" value="F:aspartate carbamoyltransferase activity"/>
    <property type="evidence" value="ECO:0007669"/>
    <property type="project" value="UniProtKB-UniRule"/>
</dbReference>
<dbReference type="GO" id="GO:0006207">
    <property type="term" value="P:'de novo' pyrimidine nucleobase biosynthetic process"/>
    <property type="evidence" value="ECO:0007669"/>
    <property type="project" value="InterPro"/>
</dbReference>
<dbReference type="GO" id="GO:0044205">
    <property type="term" value="P:'de novo' UMP biosynthetic process"/>
    <property type="evidence" value="ECO:0007669"/>
    <property type="project" value="UniProtKB-UniRule"/>
</dbReference>
<dbReference type="GO" id="GO:0006520">
    <property type="term" value="P:amino acid metabolic process"/>
    <property type="evidence" value="ECO:0007669"/>
    <property type="project" value="InterPro"/>
</dbReference>
<dbReference type="FunFam" id="3.40.50.1370:FF:000002">
    <property type="entry name" value="Aspartate carbamoyltransferase 2"/>
    <property type="match status" value="1"/>
</dbReference>
<dbReference type="Gene3D" id="3.40.50.1370">
    <property type="entry name" value="Aspartate/ornithine carbamoyltransferase"/>
    <property type="match status" value="2"/>
</dbReference>
<dbReference type="HAMAP" id="MF_00001">
    <property type="entry name" value="Asp_carb_tr"/>
    <property type="match status" value="1"/>
</dbReference>
<dbReference type="InterPro" id="IPR006132">
    <property type="entry name" value="Asp/Orn_carbamoyltranf_P-bd"/>
</dbReference>
<dbReference type="InterPro" id="IPR006130">
    <property type="entry name" value="Asp/Orn_carbamoylTrfase"/>
</dbReference>
<dbReference type="InterPro" id="IPR036901">
    <property type="entry name" value="Asp/Orn_carbamoylTrfase_sf"/>
</dbReference>
<dbReference type="InterPro" id="IPR002082">
    <property type="entry name" value="Asp_carbamoyltransf"/>
</dbReference>
<dbReference type="InterPro" id="IPR006131">
    <property type="entry name" value="Asp_carbamoyltransf_Asp/Orn-bd"/>
</dbReference>
<dbReference type="NCBIfam" id="TIGR00670">
    <property type="entry name" value="asp_carb_tr"/>
    <property type="match status" value="1"/>
</dbReference>
<dbReference type="NCBIfam" id="NF002032">
    <property type="entry name" value="PRK00856.1"/>
    <property type="match status" value="1"/>
</dbReference>
<dbReference type="PANTHER" id="PTHR45753:SF6">
    <property type="entry name" value="ASPARTATE CARBAMOYLTRANSFERASE"/>
    <property type="match status" value="1"/>
</dbReference>
<dbReference type="PANTHER" id="PTHR45753">
    <property type="entry name" value="ORNITHINE CARBAMOYLTRANSFERASE, MITOCHONDRIAL"/>
    <property type="match status" value="1"/>
</dbReference>
<dbReference type="Pfam" id="PF00185">
    <property type="entry name" value="OTCace"/>
    <property type="match status" value="1"/>
</dbReference>
<dbReference type="Pfam" id="PF02729">
    <property type="entry name" value="OTCace_N"/>
    <property type="match status" value="1"/>
</dbReference>
<dbReference type="PRINTS" id="PR00100">
    <property type="entry name" value="AOTCASE"/>
</dbReference>
<dbReference type="PRINTS" id="PR00101">
    <property type="entry name" value="ATCASE"/>
</dbReference>
<dbReference type="SUPFAM" id="SSF53671">
    <property type="entry name" value="Aspartate/ornithine carbamoyltransferase"/>
    <property type="match status" value="1"/>
</dbReference>
<dbReference type="PROSITE" id="PS00097">
    <property type="entry name" value="CARBAMOYLTRANSFERASE"/>
    <property type="match status" value="1"/>
</dbReference>
<organism>
    <name type="scientific">Clostridium botulinum (strain Okra / Type B1)</name>
    <dbReference type="NCBI Taxonomy" id="498213"/>
    <lineage>
        <taxon>Bacteria</taxon>
        <taxon>Bacillati</taxon>
        <taxon>Bacillota</taxon>
        <taxon>Clostridia</taxon>
        <taxon>Eubacteriales</taxon>
        <taxon>Clostridiaceae</taxon>
        <taxon>Clostridium</taxon>
    </lineage>
</organism>
<reference key="1">
    <citation type="journal article" date="2007" name="PLoS ONE">
        <title>Analysis of the neurotoxin complex genes in Clostridium botulinum A1-A4 and B1 strains: BoNT/A3, /Ba4 and /B1 clusters are located within plasmids.</title>
        <authorList>
            <person name="Smith T.J."/>
            <person name="Hill K.K."/>
            <person name="Foley B.T."/>
            <person name="Detter J.C."/>
            <person name="Munk A.C."/>
            <person name="Bruce D.C."/>
            <person name="Doggett N.A."/>
            <person name="Smith L.A."/>
            <person name="Marks J.D."/>
            <person name="Xie G."/>
            <person name="Brettin T.S."/>
        </authorList>
    </citation>
    <scope>NUCLEOTIDE SEQUENCE [LARGE SCALE GENOMIC DNA]</scope>
    <source>
        <strain>Okra / Type B1</strain>
    </source>
</reference>
<evidence type="ECO:0000255" key="1">
    <source>
        <dbReference type="HAMAP-Rule" id="MF_00001"/>
    </source>
</evidence>
<proteinExistence type="inferred from homology"/>
<sequence>MLKGRNLLDPMDFSLEELEEVFKLADEIIEEPEKFLHVCDGKILATLFYEPSTRTRFSFEAAMLRLGGQVIGFSEPNSSSVAKGESVADTIRTVGCYADIAAMRHPKEGAPAIAAMYSEIPVINAGDGSHQHPTQTLTDLLTIRSLKGDLSNLTIGCCGDLKFGRTVHSLVKALSRYKNNKFVFMSPEELKIPDYIRKEILEKNNIEYKEVSKMEDAMAELDILYMTRVQRERFFNEDDYVRLKDSYILDGEKMRYAKKDMMVLHPLPRVNEIAYEIDQDPRGCYFKQAKYGMYVRMALIAKLLGVR</sequence>
<comment type="function">
    <text evidence="1">Catalyzes the condensation of carbamoyl phosphate and aspartate to form carbamoyl aspartate and inorganic phosphate, the committed step in the de novo pyrimidine nucleotide biosynthesis pathway.</text>
</comment>
<comment type="catalytic activity">
    <reaction evidence="1">
        <text>carbamoyl phosphate + L-aspartate = N-carbamoyl-L-aspartate + phosphate + H(+)</text>
        <dbReference type="Rhea" id="RHEA:20013"/>
        <dbReference type="ChEBI" id="CHEBI:15378"/>
        <dbReference type="ChEBI" id="CHEBI:29991"/>
        <dbReference type="ChEBI" id="CHEBI:32814"/>
        <dbReference type="ChEBI" id="CHEBI:43474"/>
        <dbReference type="ChEBI" id="CHEBI:58228"/>
        <dbReference type="EC" id="2.1.3.2"/>
    </reaction>
</comment>
<comment type="pathway">
    <text evidence="1">Pyrimidine metabolism; UMP biosynthesis via de novo pathway; (S)-dihydroorotate from bicarbonate: step 2/3.</text>
</comment>
<comment type="subunit">
    <text evidence="1">Heterododecamer (2C3:3R2) of six catalytic PyrB chains organized as two trimers (C3), and six regulatory PyrI chains organized as three dimers (R2).</text>
</comment>
<comment type="similarity">
    <text evidence="1">Belongs to the aspartate/ornithine carbamoyltransferase superfamily. ATCase family.</text>
</comment>
<feature type="chain" id="PRO_1000088751" description="Aspartate carbamoyltransferase catalytic subunit">
    <location>
        <begin position="1"/>
        <end position="307"/>
    </location>
</feature>
<feature type="binding site" evidence="1">
    <location>
        <position position="54"/>
    </location>
    <ligand>
        <name>carbamoyl phosphate</name>
        <dbReference type="ChEBI" id="CHEBI:58228"/>
    </ligand>
</feature>
<feature type="binding site" evidence="1">
    <location>
        <position position="55"/>
    </location>
    <ligand>
        <name>carbamoyl phosphate</name>
        <dbReference type="ChEBI" id="CHEBI:58228"/>
    </ligand>
</feature>
<feature type="binding site" evidence="1">
    <location>
        <position position="83"/>
    </location>
    <ligand>
        <name>L-aspartate</name>
        <dbReference type="ChEBI" id="CHEBI:29991"/>
    </ligand>
</feature>
<feature type="binding site" evidence="1">
    <location>
        <position position="104"/>
    </location>
    <ligand>
        <name>carbamoyl phosphate</name>
        <dbReference type="ChEBI" id="CHEBI:58228"/>
    </ligand>
</feature>
<feature type="binding site" evidence="1">
    <location>
        <position position="132"/>
    </location>
    <ligand>
        <name>carbamoyl phosphate</name>
        <dbReference type="ChEBI" id="CHEBI:58228"/>
    </ligand>
</feature>
<feature type="binding site" evidence="1">
    <location>
        <position position="135"/>
    </location>
    <ligand>
        <name>carbamoyl phosphate</name>
        <dbReference type="ChEBI" id="CHEBI:58228"/>
    </ligand>
</feature>
<feature type="binding site" evidence="1">
    <location>
        <position position="165"/>
    </location>
    <ligand>
        <name>L-aspartate</name>
        <dbReference type="ChEBI" id="CHEBI:29991"/>
    </ligand>
</feature>
<feature type="binding site" evidence="1">
    <location>
        <position position="228"/>
    </location>
    <ligand>
        <name>L-aspartate</name>
        <dbReference type="ChEBI" id="CHEBI:29991"/>
    </ligand>
</feature>
<feature type="binding site" evidence="1">
    <location>
        <position position="267"/>
    </location>
    <ligand>
        <name>carbamoyl phosphate</name>
        <dbReference type="ChEBI" id="CHEBI:58228"/>
    </ligand>
</feature>
<feature type="binding site" evidence="1">
    <location>
        <position position="268"/>
    </location>
    <ligand>
        <name>carbamoyl phosphate</name>
        <dbReference type="ChEBI" id="CHEBI:58228"/>
    </ligand>
</feature>
<protein>
    <recommendedName>
        <fullName evidence="1">Aspartate carbamoyltransferase catalytic subunit</fullName>
        <ecNumber evidence="1">2.1.3.2</ecNumber>
    </recommendedName>
    <alternativeName>
        <fullName evidence="1">Aspartate transcarbamylase</fullName>
        <shortName evidence="1">ATCase</shortName>
    </alternativeName>
</protein>
<keyword id="KW-0665">Pyrimidine biosynthesis</keyword>
<keyword id="KW-0808">Transferase</keyword>